<keyword id="KW-0320">Glycogen biosynthesis</keyword>
<keyword id="KW-0328">Glycosyltransferase</keyword>
<keyword id="KW-1185">Reference proteome</keyword>
<keyword id="KW-0808">Transferase</keyword>
<reference key="1">
    <citation type="journal article" date="2016" name="Genome Announc.">
        <title>Complete genome sequence of Alkaliphilus metalliredigens strain QYMF, an alkaliphilic and metal-reducing bacterium isolated from borax-contaminated leachate ponds.</title>
        <authorList>
            <person name="Hwang C."/>
            <person name="Copeland A."/>
            <person name="Lucas S."/>
            <person name="Lapidus A."/>
            <person name="Barry K."/>
            <person name="Detter J.C."/>
            <person name="Glavina Del Rio T."/>
            <person name="Hammon N."/>
            <person name="Israni S."/>
            <person name="Dalin E."/>
            <person name="Tice H."/>
            <person name="Pitluck S."/>
            <person name="Chertkov O."/>
            <person name="Brettin T."/>
            <person name="Bruce D."/>
            <person name="Han C."/>
            <person name="Schmutz J."/>
            <person name="Larimer F."/>
            <person name="Land M.L."/>
            <person name="Hauser L."/>
            <person name="Kyrpides N."/>
            <person name="Mikhailova N."/>
            <person name="Ye Q."/>
            <person name="Zhou J."/>
            <person name="Richardson P."/>
            <person name="Fields M.W."/>
        </authorList>
    </citation>
    <scope>NUCLEOTIDE SEQUENCE [LARGE SCALE GENOMIC DNA]</scope>
    <source>
        <strain>QYMF</strain>
    </source>
</reference>
<evidence type="ECO:0000255" key="1">
    <source>
        <dbReference type="HAMAP-Rule" id="MF_00484"/>
    </source>
</evidence>
<organism>
    <name type="scientific">Alkaliphilus metalliredigens (strain QYMF)</name>
    <dbReference type="NCBI Taxonomy" id="293826"/>
    <lineage>
        <taxon>Bacteria</taxon>
        <taxon>Bacillati</taxon>
        <taxon>Bacillota</taxon>
        <taxon>Clostridia</taxon>
        <taxon>Peptostreptococcales</taxon>
        <taxon>Natronincolaceae</taxon>
        <taxon>Alkaliphilus</taxon>
    </lineage>
</organism>
<feature type="chain" id="PRO_1000060429" description="Glycogen synthase">
    <location>
        <begin position="1"/>
        <end position="475"/>
    </location>
</feature>
<feature type="binding site" evidence="1">
    <location>
        <position position="15"/>
    </location>
    <ligand>
        <name>ADP-alpha-D-glucose</name>
        <dbReference type="ChEBI" id="CHEBI:57498"/>
    </ligand>
</feature>
<dbReference type="EC" id="2.4.1.21" evidence="1"/>
<dbReference type="EMBL" id="CP000724">
    <property type="protein sequence ID" value="ABR49096.1"/>
    <property type="molecule type" value="Genomic_DNA"/>
</dbReference>
<dbReference type="RefSeq" id="WP_012064064.1">
    <property type="nucleotide sequence ID" value="NC_009633.1"/>
</dbReference>
<dbReference type="SMR" id="A6TSC8"/>
<dbReference type="STRING" id="293826.Amet_2946"/>
<dbReference type="CAZy" id="GT5">
    <property type="family name" value="Glycosyltransferase Family 5"/>
</dbReference>
<dbReference type="KEGG" id="amt:Amet_2946"/>
<dbReference type="eggNOG" id="COG0297">
    <property type="taxonomic scope" value="Bacteria"/>
</dbReference>
<dbReference type="HOGENOM" id="CLU_009583_18_2_9"/>
<dbReference type="OrthoDB" id="9808590at2"/>
<dbReference type="UniPathway" id="UPA00164"/>
<dbReference type="Proteomes" id="UP000001572">
    <property type="component" value="Chromosome"/>
</dbReference>
<dbReference type="GO" id="GO:0009011">
    <property type="term" value="F:alpha-1,4-glucan glucosyltransferase (ADP-glucose donor) activity"/>
    <property type="evidence" value="ECO:0007669"/>
    <property type="project" value="UniProtKB-UniRule"/>
</dbReference>
<dbReference type="GO" id="GO:0004373">
    <property type="term" value="F:alpha-1,4-glucan glucosyltransferase (UDP-glucose donor) activity"/>
    <property type="evidence" value="ECO:0007669"/>
    <property type="project" value="InterPro"/>
</dbReference>
<dbReference type="GO" id="GO:0005978">
    <property type="term" value="P:glycogen biosynthetic process"/>
    <property type="evidence" value="ECO:0007669"/>
    <property type="project" value="UniProtKB-UniRule"/>
</dbReference>
<dbReference type="CDD" id="cd03791">
    <property type="entry name" value="GT5_Glycogen_synthase_DULL1-like"/>
    <property type="match status" value="1"/>
</dbReference>
<dbReference type="Gene3D" id="3.40.50.2000">
    <property type="entry name" value="Glycogen Phosphorylase B"/>
    <property type="match status" value="2"/>
</dbReference>
<dbReference type="HAMAP" id="MF_00484">
    <property type="entry name" value="Glycogen_synth"/>
    <property type="match status" value="1"/>
</dbReference>
<dbReference type="InterPro" id="IPR001296">
    <property type="entry name" value="Glyco_trans_1"/>
</dbReference>
<dbReference type="InterPro" id="IPR011835">
    <property type="entry name" value="GS/SS"/>
</dbReference>
<dbReference type="InterPro" id="IPR013534">
    <property type="entry name" value="Starch_synth_cat_dom"/>
</dbReference>
<dbReference type="NCBIfam" id="TIGR02095">
    <property type="entry name" value="glgA"/>
    <property type="match status" value="1"/>
</dbReference>
<dbReference type="NCBIfam" id="NF001898">
    <property type="entry name" value="PRK00654.1-1"/>
    <property type="match status" value="1"/>
</dbReference>
<dbReference type="NCBIfam" id="NF001899">
    <property type="entry name" value="PRK00654.1-2"/>
    <property type="match status" value="1"/>
</dbReference>
<dbReference type="PANTHER" id="PTHR45825:SF11">
    <property type="entry name" value="ALPHA AMYLASE DOMAIN-CONTAINING PROTEIN"/>
    <property type="match status" value="1"/>
</dbReference>
<dbReference type="PANTHER" id="PTHR45825">
    <property type="entry name" value="GRANULE-BOUND STARCH SYNTHASE 1, CHLOROPLASTIC/AMYLOPLASTIC"/>
    <property type="match status" value="1"/>
</dbReference>
<dbReference type="Pfam" id="PF08323">
    <property type="entry name" value="Glyco_transf_5"/>
    <property type="match status" value="1"/>
</dbReference>
<dbReference type="Pfam" id="PF00534">
    <property type="entry name" value="Glycos_transf_1"/>
    <property type="match status" value="1"/>
</dbReference>
<dbReference type="SUPFAM" id="SSF53756">
    <property type="entry name" value="UDP-Glycosyltransferase/glycogen phosphorylase"/>
    <property type="match status" value="1"/>
</dbReference>
<proteinExistence type="inferred from homology"/>
<accession>A6TSC8</accession>
<gene>
    <name evidence="1" type="primary">glgA</name>
    <name type="ordered locus">Amet_2946</name>
</gene>
<protein>
    <recommendedName>
        <fullName evidence="1">Glycogen synthase</fullName>
        <ecNumber evidence="1">2.4.1.21</ecNumber>
    </recommendedName>
    <alternativeName>
        <fullName evidence="1">Starch [bacterial glycogen] synthase</fullName>
    </alternativeName>
</protein>
<name>GLGA_ALKMQ</name>
<sequence length="475" mass="54590">MRVMFAASEATPFSKSGGLGDVIGSLPFYLKKLGVDVSVILPKYQEIPQDLKMKMKWIKSMTVPVGWRNQFCGIEILSYKDIHFYFVDNQYYFNREGFYGHNDDGERFAFFSRSVLEILPHIDCKPDIIHCHDWQTAMISYLLKTQYQHHGFYKNIKTVFTIHNLKYQGVFPQEVLGDLFNGSQQHFNEGGVEYHGNVNYMKGGLNFSDYITTVSPTYAQEIQDPFFGEGLEGVLSRKKKQLQGVTNGIDDSVYNPQTDIHLFKNFSSENLRNKKDNKLGLQERLNLAVDAKIPMIGMVTRLVEQKGLDLVANQLEKLMEEEIQLVVLGTGDHQYEEIFRQAAIKYPERISTNLFFDEVLAQQIYGGSDFFLMPSLFEPCGLGQLIALRYGTVPIVRETGGLKDTIQYYDEVSKEGNGFTFTNYNAHDMFNTIKEAIRLYPDKRKFNKVVRNAMNTKVGWEESAKTYLKLYRSLG</sequence>
<comment type="function">
    <text evidence="1">Synthesizes alpha-1,4-glucan chains using ADP-glucose.</text>
</comment>
<comment type="catalytic activity">
    <reaction evidence="1">
        <text>[(1-&gt;4)-alpha-D-glucosyl](n) + ADP-alpha-D-glucose = [(1-&gt;4)-alpha-D-glucosyl](n+1) + ADP + H(+)</text>
        <dbReference type="Rhea" id="RHEA:18189"/>
        <dbReference type="Rhea" id="RHEA-COMP:9584"/>
        <dbReference type="Rhea" id="RHEA-COMP:9587"/>
        <dbReference type="ChEBI" id="CHEBI:15378"/>
        <dbReference type="ChEBI" id="CHEBI:15444"/>
        <dbReference type="ChEBI" id="CHEBI:57498"/>
        <dbReference type="ChEBI" id="CHEBI:456216"/>
        <dbReference type="EC" id="2.4.1.21"/>
    </reaction>
</comment>
<comment type="pathway">
    <text evidence="1">Glycan biosynthesis; glycogen biosynthesis.</text>
</comment>
<comment type="similarity">
    <text evidence="1">Belongs to the glycosyltransferase 1 family. Bacterial/plant glycogen synthase subfamily.</text>
</comment>